<name>RIMO_POLAQ</name>
<protein>
    <recommendedName>
        <fullName evidence="1">Ribosomal protein uS12 methylthiotransferase RimO</fullName>
        <shortName evidence="1">uS12 MTTase</shortName>
        <shortName evidence="1">uS12 methylthiotransferase</shortName>
        <ecNumber evidence="1">2.8.4.4</ecNumber>
    </recommendedName>
    <alternativeName>
        <fullName evidence="1">Ribosomal protein uS12 (aspartate-C(3))-methylthiotransferase</fullName>
    </alternativeName>
    <alternativeName>
        <fullName evidence="1">Ribosome maturation factor RimO</fullName>
    </alternativeName>
</protein>
<feature type="chain" id="PRO_0000374922" description="Ribosomal protein uS12 methylthiotransferase RimO">
    <location>
        <begin position="1"/>
        <end position="452"/>
    </location>
</feature>
<feature type="domain" description="MTTase N-terminal" evidence="1">
    <location>
        <begin position="3"/>
        <end position="118"/>
    </location>
</feature>
<feature type="domain" description="Radical SAM core" evidence="2">
    <location>
        <begin position="135"/>
        <end position="381"/>
    </location>
</feature>
<feature type="domain" description="TRAM" evidence="1">
    <location>
        <begin position="384"/>
        <end position="452"/>
    </location>
</feature>
<feature type="binding site" evidence="1">
    <location>
        <position position="12"/>
    </location>
    <ligand>
        <name>[4Fe-4S] cluster</name>
        <dbReference type="ChEBI" id="CHEBI:49883"/>
        <label>1</label>
    </ligand>
</feature>
<feature type="binding site" evidence="1">
    <location>
        <position position="48"/>
    </location>
    <ligand>
        <name>[4Fe-4S] cluster</name>
        <dbReference type="ChEBI" id="CHEBI:49883"/>
        <label>1</label>
    </ligand>
</feature>
<feature type="binding site" evidence="1">
    <location>
        <position position="77"/>
    </location>
    <ligand>
        <name>[4Fe-4S] cluster</name>
        <dbReference type="ChEBI" id="CHEBI:49883"/>
        <label>1</label>
    </ligand>
</feature>
<feature type="binding site" evidence="1">
    <location>
        <position position="149"/>
    </location>
    <ligand>
        <name>[4Fe-4S] cluster</name>
        <dbReference type="ChEBI" id="CHEBI:49883"/>
        <label>2</label>
        <note>4Fe-4S-S-AdoMet</note>
    </ligand>
</feature>
<feature type="binding site" evidence="1">
    <location>
        <position position="153"/>
    </location>
    <ligand>
        <name>[4Fe-4S] cluster</name>
        <dbReference type="ChEBI" id="CHEBI:49883"/>
        <label>2</label>
        <note>4Fe-4S-S-AdoMet</note>
    </ligand>
</feature>
<feature type="binding site" evidence="1">
    <location>
        <position position="156"/>
    </location>
    <ligand>
        <name>[4Fe-4S] cluster</name>
        <dbReference type="ChEBI" id="CHEBI:49883"/>
        <label>2</label>
        <note>4Fe-4S-S-AdoMet</note>
    </ligand>
</feature>
<organism>
    <name type="scientific">Polynucleobacter asymbioticus (strain DSM 18221 / CIP 109841 / QLW-P1DMWA-1)</name>
    <name type="common">Polynucleobacter necessarius subsp. asymbioticus</name>
    <dbReference type="NCBI Taxonomy" id="312153"/>
    <lineage>
        <taxon>Bacteria</taxon>
        <taxon>Pseudomonadati</taxon>
        <taxon>Pseudomonadota</taxon>
        <taxon>Betaproteobacteria</taxon>
        <taxon>Burkholderiales</taxon>
        <taxon>Burkholderiaceae</taxon>
        <taxon>Polynucleobacter</taxon>
    </lineage>
</organism>
<gene>
    <name evidence="1" type="primary">rimO</name>
    <name type="ordered locus">Pnuc_0926</name>
</gene>
<evidence type="ECO:0000255" key="1">
    <source>
        <dbReference type="HAMAP-Rule" id="MF_01865"/>
    </source>
</evidence>
<evidence type="ECO:0000255" key="2">
    <source>
        <dbReference type="PROSITE-ProRule" id="PRU01266"/>
    </source>
</evidence>
<proteinExistence type="inferred from homology"/>
<comment type="function">
    <text evidence="1">Catalyzes the methylthiolation of an aspartic acid residue of ribosomal protein uS12.</text>
</comment>
<comment type="catalytic activity">
    <reaction evidence="1">
        <text>L-aspartate(89)-[ribosomal protein uS12]-hydrogen + (sulfur carrier)-SH + AH2 + 2 S-adenosyl-L-methionine = 3-methylsulfanyl-L-aspartate(89)-[ribosomal protein uS12]-hydrogen + (sulfur carrier)-H + 5'-deoxyadenosine + L-methionine + A + S-adenosyl-L-homocysteine + 2 H(+)</text>
        <dbReference type="Rhea" id="RHEA:37087"/>
        <dbReference type="Rhea" id="RHEA-COMP:10460"/>
        <dbReference type="Rhea" id="RHEA-COMP:10461"/>
        <dbReference type="Rhea" id="RHEA-COMP:14737"/>
        <dbReference type="Rhea" id="RHEA-COMP:14739"/>
        <dbReference type="ChEBI" id="CHEBI:13193"/>
        <dbReference type="ChEBI" id="CHEBI:15378"/>
        <dbReference type="ChEBI" id="CHEBI:17319"/>
        <dbReference type="ChEBI" id="CHEBI:17499"/>
        <dbReference type="ChEBI" id="CHEBI:29917"/>
        <dbReference type="ChEBI" id="CHEBI:29961"/>
        <dbReference type="ChEBI" id="CHEBI:57844"/>
        <dbReference type="ChEBI" id="CHEBI:57856"/>
        <dbReference type="ChEBI" id="CHEBI:59789"/>
        <dbReference type="ChEBI" id="CHEBI:64428"/>
        <dbReference type="ChEBI" id="CHEBI:73599"/>
        <dbReference type="EC" id="2.8.4.4"/>
    </reaction>
</comment>
<comment type="cofactor">
    <cofactor evidence="1">
        <name>[4Fe-4S] cluster</name>
        <dbReference type="ChEBI" id="CHEBI:49883"/>
    </cofactor>
    <text evidence="1">Binds 2 [4Fe-4S] clusters. One cluster is coordinated with 3 cysteines and an exchangeable S-adenosyl-L-methionine.</text>
</comment>
<comment type="subcellular location">
    <subcellularLocation>
        <location evidence="1">Cytoplasm</location>
    </subcellularLocation>
</comment>
<comment type="similarity">
    <text evidence="1">Belongs to the methylthiotransferase family. RimO subfamily.</text>
</comment>
<dbReference type="EC" id="2.8.4.4" evidence="1"/>
<dbReference type="EMBL" id="CP000655">
    <property type="protein sequence ID" value="ABP34142.1"/>
    <property type="molecule type" value="Genomic_DNA"/>
</dbReference>
<dbReference type="RefSeq" id="WP_011902767.1">
    <property type="nucleotide sequence ID" value="NC_009379.1"/>
</dbReference>
<dbReference type="SMR" id="A4SXC8"/>
<dbReference type="GeneID" id="31481292"/>
<dbReference type="KEGG" id="pnu:Pnuc_0926"/>
<dbReference type="eggNOG" id="COG0621">
    <property type="taxonomic scope" value="Bacteria"/>
</dbReference>
<dbReference type="HOGENOM" id="CLU_018697_0_0_4"/>
<dbReference type="Proteomes" id="UP000000231">
    <property type="component" value="Chromosome"/>
</dbReference>
<dbReference type="GO" id="GO:0005829">
    <property type="term" value="C:cytosol"/>
    <property type="evidence" value="ECO:0007669"/>
    <property type="project" value="TreeGrafter"/>
</dbReference>
<dbReference type="GO" id="GO:0051539">
    <property type="term" value="F:4 iron, 4 sulfur cluster binding"/>
    <property type="evidence" value="ECO:0007669"/>
    <property type="project" value="UniProtKB-UniRule"/>
</dbReference>
<dbReference type="GO" id="GO:0035599">
    <property type="term" value="F:aspartic acid methylthiotransferase activity"/>
    <property type="evidence" value="ECO:0007669"/>
    <property type="project" value="TreeGrafter"/>
</dbReference>
<dbReference type="GO" id="GO:0046872">
    <property type="term" value="F:metal ion binding"/>
    <property type="evidence" value="ECO:0007669"/>
    <property type="project" value="UniProtKB-KW"/>
</dbReference>
<dbReference type="GO" id="GO:0103039">
    <property type="term" value="F:protein methylthiotransferase activity"/>
    <property type="evidence" value="ECO:0007669"/>
    <property type="project" value="UniProtKB-EC"/>
</dbReference>
<dbReference type="GO" id="GO:0006400">
    <property type="term" value="P:tRNA modification"/>
    <property type="evidence" value="ECO:0007669"/>
    <property type="project" value="InterPro"/>
</dbReference>
<dbReference type="CDD" id="cd01335">
    <property type="entry name" value="Radical_SAM"/>
    <property type="match status" value="1"/>
</dbReference>
<dbReference type="FunFam" id="3.40.50.12160:FF:000002">
    <property type="entry name" value="Ribosomal protein S12 methylthiotransferase RimO"/>
    <property type="match status" value="1"/>
</dbReference>
<dbReference type="FunFam" id="3.80.30.20:FF:000001">
    <property type="entry name" value="tRNA-2-methylthio-N(6)-dimethylallyladenosine synthase 2"/>
    <property type="match status" value="1"/>
</dbReference>
<dbReference type="Gene3D" id="3.40.50.12160">
    <property type="entry name" value="Methylthiotransferase, N-terminal domain"/>
    <property type="match status" value="1"/>
</dbReference>
<dbReference type="Gene3D" id="2.40.50.140">
    <property type="entry name" value="Nucleic acid-binding proteins"/>
    <property type="match status" value="1"/>
</dbReference>
<dbReference type="Gene3D" id="3.80.30.20">
    <property type="entry name" value="tm_1862 like domain"/>
    <property type="match status" value="1"/>
</dbReference>
<dbReference type="HAMAP" id="MF_01865">
    <property type="entry name" value="MTTase_RimO"/>
    <property type="match status" value="1"/>
</dbReference>
<dbReference type="InterPro" id="IPR006638">
    <property type="entry name" value="Elp3/MiaA/NifB-like_rSAM"/>
</dbReference>
<dbReference type="InterPro" id="IPR005839">
    <property type="entry name" value="Methylthiotransferase"/>
</dbReference>
<dbReference type="InterPro" id="IPR020612">
    <property type="entry name" value="Methylthiotransferase_CS"/>
</dbReference>
<dbReference type="InterPro" id="IPR013848">
    <property type="entry name" value="Methylthiotransferase_N"/>
</dbReference>
<dbReference type="InterPro" id="IPR038135">
    <property type="entry name" value="Methylthiotransferase_N_sf"/>
</dbReference>
<dbReference type="InterPro" id="IPR012340">
    <property type="entry name" value="NA-bd_OB-fold"/>
</dbReference>
<dbReference type="InterPro" id="IPR005840">
    <property type="entry name" value="Ribosomal_uS12_MeSTrfase_RimO"/>
</dbReference>
<dbReference type="InterPro" id="IPR007197">
    <property type="entry name" value="rSAM"/>
</dbReference>
<dbReference type="InterPro" id="IPR023404">
    <property type="entry name" value="rSAM_horseshoe"/>
</dbReference>
<dbReference type="InterPro" id="IPR002792">
    <property type="entry name" value="TRAM_dom"/>
</dbReference>
<dbReference type="NCBIfam" id="TIGR01125">
    <property type="entry name" value="30S ribosomal protein S12 methylthiotransferase RimO"/>
    <property type="match status" value="1"/>
</dbReference>
<dbReference type="NCBIfam" id="TIGR00089">
    <property type="entry name" value="MiaB/RimO family radical SAM methylthiotransferase"/>
    <property type="match status" value="1"/>
</dbReference>
<dbReference type="PANTHER" id="PTHR43837">
    <property type="entry name" value="RIBOSOMAL PROTEIN S12 METHYLTHIOTRANSFERASE RIMO"/>
    <property type="match status" value="1"/>
</dbReference>
<dbReference type="PANTHER" id="PTHR43837:SF1">
    <property type="entry name" value="RIBOSOMAL PROTEIN US12 METHYLTHIOTRANSFERASE RIMO"/>
    <property type="match status" value="1"/>
</dbReference>
<dbReference type="Pfam" id="PF04055">
    <property type="entry name" value="Radical_SAM"/>
    <property type="match status" value="1"/>
</dbReference>
<dbReference type="Pfam" id="PF18693">
    <property type="entry name" value="TRAM_2"/>
    <property type="match status" value="1"/>
</dbReference>
<dbReference type="Pfam" id="PF00919">
    <property type="entry name" value="UPF0004"/>
    <property type="match status" value="1"/>
</dbReference>
<dbReference type="SFLD" id="SFLDG01082">
    <property type="entry name" value="B12-binding_domain_containing"/>
    <property type="match status" value="1"/>
</dbReference>
<dbReference type="SFLD" id="SFLDG01061">
    <property type="entry name" value="methylthiotransferase"/>
    <property type="match status" value="1"/>
</dbReference>
<dbReference type="SFLD" id="SFLDF00274">
    <property type="entry name" value="ribosomal_protein_S12_methylth"/>
    <property type="match status" value="1"/>
</dbReference>
<dbReference type="SMART" id="SM00729">
    <property type="entry name" value="Elp3"/>
    <property type="match status" value="1"/>
</dbReference>
<dbReference type="SUPFAM" id="SSF102114">
    <property type="entry name" value="Radical SAM enzymes"/>
    <property type="match status" value="1"/>
</dbReference>
<dbReference type="PROSITE" id="PS51449">
    <property type="entry name" value="MTTASE_N"/>
    <property type="match status" value="1"/>
</dbReference>
<dbReference type="PROSITE" id="PS01278">
    <property type="entry name" value="MTTASE_RADICAL"/>
    <property type="match status" value="1"/>
</dbReference>
<dbReference type="PROSITE" id="PS51918">
    <property type="entry name" value="RADICAL_SAM"/>
    <property type="match status" value="1"/>
</dbReference>
<dbReference type="PROSITE" id="PS50926">
    <property type="entry name" value="TRAM"/>
    <property type="match status" value="1"/>
</dbReference>
<accession>A4SXC8</accession>
<reference key="1">
    <citation type="journal article" date="2012" name="Stand. Genomic Sci.">
        <title>Complete genome sequence of Polynucleobacter necessarius subsp. asymbioticus type strain (QLW-P1DMWA-1(T)).</title>
        <authorList>
            <person name="Meincke L."/>
            <person name="Copeland A."/>
            <person name="Lapidus A."/>
            <person name="Lucas S."/>
            <person name="Berry K.W."/>
            <person name="Del Rio T.G."/>
            <person name="Hammon N."/>
            <person name="Dalin E."/>
            <person name="Tice H."/>
            <person name="Pitluck S."/>
            <person name="Richardson P."/>
            <person name="Bruce D."/>
            <person name="Goodwin L."/>
            <person name="Han C."/>
            <person name="Tapia R."/>
            <person name="Detter J.C."/>
            <person name="Schmutz J."/>
            <person name="Brettin T."/>
            <person name="Larimer F."/>
            <person name="Land M."/>
            <person name="Hauser L."/>
            <person name="Kyrpides N.C."/>
            <person name="Ivanova N."/>
            <person name="Goker M."/>
            <person name="Woyke T."/>
            <person name="Wu Q.L."/>
            <person name="Pockl M."/>
            <person name="Hahn M.W."/>
            <person name="Klenk H.P."/>
        </authorList>
    </citation>
    <scope>NUCLEOTIDE SEQUENCE [LARGE SCALE GENOMIC DNA]</scope>
    <source>
        <strain>DSM 18221 / CIP 109841 / QLW-P1DMWA-1</strain>
    </source>
</reference>
<sequence>MVGKIGFVSLGCPKALVDSELILTQLSAEGYETAKDYSGADLVVVNTCGFIDSAVEESLSAIGEALAENGKVIVTGCLGARKNADGSDLILSIHPKVLAVTGPHATDEVMQAIHLHLPKPHDPFTDLVPPAGVKLTPKHYAYLKISEGCNHRCTFCIIPSLRGDLVSRPIGEVLLEAKRLFESGVKELLVVSQDTSAYGVDIQYRTGFWDGKPVKTRMFDLVNALNQIAREHQAWVRLHYVYPYPHVDDILPLMAEFSEHGYGVLPYLDIPLQHAHPDVLKRMKRPASGEKNLERILAWREACPDLVIRSTFIAGFPGETEEEFEYLLNFLEEAQIDRAGCFAYSPVEGAKANELDNPVPDAVREERRARFMAKAEDISIKRLAKKIGKRVQVLIDRVDESGGIGRTIGDAPEIDGLVRVLPPTKPSKRYRTGEIIRATVISSQGHDLIAET</sequence>
<keyword id="KW-0004">4Fe-4S</keyword>
<keyword id="KW-0963">Cytoplasm</keyword>
<keyword id="KW-0408">Iron</keyword>
<keyword id="KW-0411">Iron-sulfur</keyword>
<keyword id="KW-0479">Metal-binding</keyword>
<keyword id="KW-1185">Reference proteome</keyword>
<keyword id="KW-0949">S-adenosyl-L-methionine</keyword>
<keyword id="KW-0808">Transferase</keyword>